<organism>
    <name type="scientific">Rattus norvegicus</name>
    <name type="common">Rat</name>
    <dbReference type="NCBI Taxonomy" id="10116"/>
    <lineage>
        <taxon>Eukaryota</taxon>
        <taxon>Metazoa</taxon>
        <taxon>Chordata</taxon>
        <taxon>Craniata</taxon>
        <taxon>Vertebrata</taxon>
        <taxon>Euteleostomi</taxon>
        <taxon>Mammalia</taxon>
        <taxon>Eutheria</taxon>
        <taxon>Euarchontoglires</taxon>
        <taxon>Glires</taxon>
        <taxon>Rodentia</taxon>
        <taxon>Myomorpha</taxon>
        <taxon>Muroidea</taxon>
        <taxon>Muridae</taxon>
        <taxon>Murinae</taxon>
        <taxon>Rattus</taxon>
    </lineage>
</organism>
<proteinExistence type="evidence at transcript level"/>
<feature type="chain" id="PRO_0000049209" description="Homeobox protein OTX1">
    <location>
        <begin position="1"/>
        <end position="355"/>
    </location>
</feature>
<feature type="DNA-binding region" description="Homeobox" evidence="3">
    <location>
        <begin position="38"/>
        <end position="97"/>
    </location>
</feature>
<feature type="region of interest" description="Disordered" evidence="4">
    <location>
        <begin position="92"/>
        <end position="144"/>
    </location>
</feature>
<feature type="region of interest" description="Disordered" evidence="4">
    <location>
        <begin position="257"/>
        <end position="306"/>
    </location>
</feature>
<feature type="compositionally biased region" description="Polar residues" evidence="4">
    <location>
        <begin position="94"/>
        <end position="103"/>
    </location>
</feature>
<feature type="compositionally biased region" description="Low complexity" evidence="4">
    <location>
        <begin position="115"/>
        <end position="144"/>
    </location>
</feature>
<feature type="compositionally biased region" description="Basic residues" evidence="4">
    <location>
        <begin position="274"/>
        <end position="284"/>
    </location>
</feature>
<feature type="compositionally biased region" description="Basic residues" evidence="4">
    <location>
        <begin position="291"/>
        <end position="303"/>
    </location>
</feature>
<feature type="cross-link" description="Glycyl lysine isopeptide (Lys-Gly) (interchain with G-Cter in SUMO2)" evidence="2">
    <location>
        <position position="345"/>
    </location>
</feature>
<feature type="sequence conflict" description="In Ref. 2; S81924." evidence="5" ref="2">
    <original>T</original>
    <variation>A</variation>
    <location>
        <position position="219"/>
    </location>
</feature>
<feature type="sequence conflict" description="In Ref. 2; S81924." evidence="5" ref="2">
    <original>R</original>
    <variation>G</variation>
    <location>
        <position position="229"/>
    </location>
</feature>
<keyword id="KW-0217">Developmental protein</keyword>
<keyword id="KW-0238">DNA-binding</keyword>
<keyword id="KW-0371">Homeobox</keyword>
<keyword id="KW-1017">Isopeptide bond</keyword>
<keyword id="KW-0539">Nucleus</keyword>
<keyword id="KW-1185">Reference proteome</keyword>
<keyword id="KW-0832">Ubl conjugation</keyword>
<accession>Q63410</accession>
<accession>Q64203</accession>
<gene>
    <name type="primary">Otx1</name>
</gene>
<comment type="function">
    <text evidence="1">Probably plays a role in the development of the brain and the sense organs. Can bind to the BCD target sequence (BTS): 5'-TCTAATCCC-3' (By similarity). May play a role in the specification or differentiation of neurons in the deep layers of the cerebral cortex, and also in cerebellar regionalization during early development.</text>
</comment>
<comment type="subcellular location">
    <subcellularLocation>
        <location evidence="5">Nucleus</location>
    </subcellularLocation>
</comment>
<comment type="tissue specificity">
    <text>Brain: restricted regions of the developing rostral brain including the presumptive cerebral cortex and olfactory bulbs; expressed in the developing olfactory, auricolar and ocular systems, including the covering of the optic nerve.</text>
</comment>
<comment type="developmental stage">
    <text>Expressed throughout the forebrain and midbrain during development, and in addition is also seen in discrete spatial and temporal domains in the developing cerebral cortex and cerebellum. Confined to a subpopulation of neurons in layers 5 and 6 within the adult cerebral cortex and during development expression is high in the progenitors of these deep-layer cells. Expressed in the developing cerebellum in spatially restricted regions of the external granular layer.</text>
</comment>
<comment type="similarity">
    <text evidence="5">Belongs to the paired homeobox family. Bicoid subfamily.</text>
</comment>
<protein>
    <recommendedName>
        <fullName>Homeobox protein OTX1</fullName>
    </recommendedName>
    <alternativeName>
        <fullName>Orthodenticle homolog 1</fullName>
    </alternativeName>
</protein>
<dbReference type="EMBL" id="L32602">
    <property type="protein sequence ID" value="AAA53557.1"/>
    <property type="molecule type" value="mRNA"/>
</dbReference>
<dbReference type="EMBL" id="S81924">
    <property type="status" value="NOT_ANNOTATED_CDS"/>
    <property type="molecule type" value="mRNA"/>
</dbReference>
<dbReference type="PIR" id="I56547">
    <property type="entry name" value="I56547"/>
</dbReference>
<dbReference type="RefSeq" id="NP_037241.1">
    <property type="nucleotide sequence ID" value="NM_013109.2"/>
</dbReference>
<dbReference type="SMR" id="Q63410"/>
<dbReference type="FunCoup" id="Q63410">
    <property type="interactions" value="405"/>
</dbReference>
<dbReference type="STRING" id="10116.ENSRNOP00000072147"/>
<dbReference type="PhosphoSitePlus" id="Q63410"/>
<dbReference type="GeneID" id="25646"/>
<dbReference type="KEGG" id="rno:25646"/>
<dbReference type="UCSC" id="RGD:3237">
    <property type="organism name" value="rat"/>
</dbReference>
<dbReference type="AGR" id="RGD:3237"/>
<dbReference type="CTD" id="5013"/>
<dbReference type="RGD" id="3237">
    <property type="gene designation" value="Otx1"/>
</dbReference>
<dbReference type="InParanoid" id="Q63410"/>
<dbReference type="PhylomeDB" id="Q63410"/>
<dbReference type="PRO" id="PR:Q63410"/>
<dbReference type="Proteomes" id="UP000002494">
    <property type="component" value="Unplaced"/>
</dbReference>
<dbReference type="GO" id="GO:0005634">
    <property type="term" value="C:nucleus"/>
    <property type="evidence" value="ECO:0000318"/>
    <property type="project" value="GO_Central"/>
</dbReference>
<dbReference type="GO" id="GO:0001228">
    <property type="term" value="F:DNA-binding transcription activator activity, RNA polymerase II-specific"/>
    <property type="evidence" value="ECO:0000266"/>
    <property type="project" value="RGD"/>
</dbReference>
<dbReference type="GO" id="GO:0000981">
    <property type="term" value="F:DNA-binding transcription factor activity, RNA polymerase II-specific"/>
    <property type="evidence" value="ECO:0000318"/>
    <property type="project" value="GO_Central"/>
</dbReference>
<dbReference type="GO" id="GO:0000978">
    <property type="term" value="F:RNA polymerase II cis-regulatory region sequence-specific DNA binding"/>
    <property type="evidence" value="ECO:0000266"/>
    <property type="project" value="RGD"/>
</dbReference>
<dbReference type="GO" id="GO:1990837">
    <property type="term" value="F:sequence-specific double-stranded DNA binding"/>
    <property type="evidence" value="ECO:0000266"/>
    <property type="project" value="RGD"/>
</dbReference>
<dbReference type="GO" id="GO:0009952">
    <property type="term" value="P:anterior/posterior pattern specification"/>
    <property type="evidence" value="ECO:0000266"/>
    <property type="project" value="RGD"/>
</dbReference>
<dbReference type="GO" id="GO:0048852">
    <property type="term" value="P:diencephalon morphogenesis"/>
    <property type="evidence" value="ECO:0000266"/>
    <property type="project" value="RGD"/>
</dbReference>
<dbReference type="GO" id="GO:0030900">
    <property type="term" value="P:forebrain development"/>
    <property type="evidence" value="ECO:0000266"/>
    <property type="project" value="RGD"/>
</dbReference>
<dbReference type="GO" id="GO:0042472">
    <property type="term" value="P:inner ear morphogenesis"/>
    <property type="evidence" value="ECO:0000266"/>
    <property type="project" value="RGD"/>
</dbReference>
<dbReference type="GO" id="GO:0022037">
    <property type="term" value="P:metencephalon development"/>
    <property type="evidence" value="ECO:0000266"/>
    <property type="project" value="RGD"/>
</dbReference>
<dbReference type="GO" id="GO:0030901">
    <property type="term" value="P:midbrain development"/>
    <property type="evidence" value="ECO:0000266"/>
    <property type="project" value="RGD"/>
</dbReference>
<dbReference type="GO" id="GO:0045944">
    <property type="term" value="P:positive regulation of transcription by RNA polymerase II"/>
    <property type="evidence" value="ECO:0000266"/>
    <property type="project" value="RGD"/>
</dbReference>
<dbReference type="GO" id="GO:0006357">
    <property type="term" value="P:regulation of transcription by RNA polymerase II"/>
    <property type="evidence" value="ECO:0000266"/>
    <property type="project" value="RGD"/>
</dbReference>
<dbReference type="CDD" id="cd00086">
    <property type="entry name" value="homeodomain"/>
    <property type="match status" value="1"/>
</dbReference>
<dbReference type="FunFam" id="1.10.10.60:FF:000142">
    <property type="entry name" value="homeobox protein OTX2 isoform X2"/>
    <property type="match status" value="1"/>
</dbReference>
<dbReference type="Gene3D" id="1.10.10.60">
    <property type="entry name" value="Homeodomain-like"/>
    <property type="match status" value="1"/>
</dbReference>
<dbReference type="InterPro" id="IPR001356">
    <property type="entry name" value="HD"/>
</dbReference>
<dbReference type="InterPro" id="IPR017970">
    <property type="entry name" value="Homeobox_CS"/>
</dbReference>
<dbReference type="InterPro" id="IPR009057">
    <property type="entry name" value="Homeodomain-like_sf"/>
</dbReference>
<dbReference type="InterPro" id="IPR003026">
    <property type="entry name" value="Otx1_TF"/>
</dbReference>
<dbReference type="InterPro" id="IPR003025">
    <property type="entry name" value="Otx_TF"/>
</dbReference>
<dbReference type="InterPro" id="IPR013851">
    <property type="entry name" value="Otx_TF_C"/>
</dbReference>
<dbReference type="PANTHER" id="PTHR45793">
    <property type="entry name" value="HOMEOBOX PROTEIN"/>
    <property type="match status" value="1"/>
</dbReference>
<dbReference type="PANTHER" id="PTHR45793:SF9">
    <property type="entry name" value="HOMEOBOX PROTEIN OTX1"/>
    <property type="match status" value="1"/>
</dbReference>
<dbReference type="Pfam" id="PF00046">
    <property type="entry name" value="Homeodomain"/>
    <property type="match status" value="1"/>
</dbReference>
<dbReference type="Pfam" id="PF03529">
    <property type="entry name" value="TF_Otx"/>
    <property type="match status" value="1"/>
</dbReference>
<dbReference type="PRINTS" id="PR01256">
    <property type="entry name" value="OTX1HOMEOBOX"/>
</dbReference>
<dbReference type="PRINTS" id="PR01255">
    <property type="entry name" value="OTXHOMEOBOX"/>
</dbReference>
<dbReference type="SMART" id="SM00389">
    <property type="entry name" value="HOX"/>
    <property type="match status" value="1"/>
</dbReference>
<dbReference type="SUPFAM" id="SSF46689">
    <property type="entry name" value="Homeodomain-like"/>
    <property type="match status" value="1"/>
</dbReference>
<dbReference type="PROSITE" id="PS00027">
    <property type="entry name" value="HOMEOBOX_1"/>
    <property type="match status" value="1"/>
</dbReference>
<dbReference type="PROSITE" id="PS50071">
    <property type="entry name" value="HOMEOBOX_2"/>
    <property type="match status" value="1"/>
</dbReference>
<evidence type="ECO:0000250" key="1"/>
<evidence type="ECO:0000250" key="2">
    <source>
        <dbReference type="UniProtKB" id="P32242"/>
    </source>
</evidence>
<evidence type="ECO:0000255" key="3">
    <source>
        <dbReference type="PROSITE-ProRule" id="PRU00108"/>
    </source>
</evidence>
<evidence type="ECO:0000256" key="4">
    <source>
        <dbReference type="SAM" id="MobiDB-lite"/>
    </source>
</evidence>
<evidence type="ECO:0000305" key="5"/>
<name>OTX1_RAT</name>
<reference key="1">
    <citation type="journal article" date="1994" name="J. Neurosci.">
        <title>Otx1 and Otx2 define layers and regions in developing cerebral cortex and cerebellum.</title>
        <authorList>
            <person name="Frantz G.D."/>
            <person name="Weimann J.M."/>
            <person name="Levin M.E."/>
            <person name="McConnell S.K."/>
        </authorList>
    </citation>
    <scope>NUCLEOTIDE SEQUENCE [MRNA]</scope>
    <source>
        <tissue>Brain</tissue>
    </source>
</reference>
<reference key="2">
    <citation type="journal article" date="1995" name="J. Neurosci.">
        <title>Fibroblast growth factor 2 increases Otx2 expression in precursor cells from mammalian telencephalon.</title>
        <authorList>
            <person name="Robel L."/>
            <person name="Ding M."/>
            <person name="James A.J."/>
            <person name="Lin X."/>
            <person name="Simeone A."/>
            <person name="Leckman J.F."/>
            <person name="Vaccarino F.M."/>
        </authorList>
    </citation>
    <scope>NUCLEOTIDE SEQUENCE [MRNA] OF 176-323</scope>
</reference>
<sequence length="355" mass="37603">MMSYLKQPPYGMNGLGLAGPAMDLLHPSVGYPATPRKQRRERTTFTRSQLDVLEALFAKTRYPDIFMREEVALKINLPESRVQVWFKNRRAKCRQQQQSGNGTKSRPVKKKSSPVRESSGSESSGQFTPPAVSSSASSSSSASSASANPAAAAAAGLGGNPVAAASSLSTPTASSIWSPASISPGSAPASVSVPEPLGAPSNASCMQRSVAAGAATAATSYPMSYGQGRSYGQGYPAPSSSYFGGVDCSSYLAPMHSHHHPHQLSPMAPSSMAGHHHHHPHAHHPLSQSSGHHHHHHHHHHHQGYGGSGLAFNSADCLDYKEPAAAAASSAWKLNFNSPDCLDYKDQASWRFQVL</sequence>